<accession>P10408</accession>
<accession>P75642</accession>
<comment type="function">
    <text evidence="4 5 6 7 10">Required for protein export, interacts with the SecYEG preprotein conducting channel. SecA has a central role in coupling the hydrolysis of ATP to the transfer of proteins into and across the cell membrane, serving both as a receptor for the preprotein-SecB complex and as an ATP-driven molecular motor driving the stepwise translocation of polypeptide chains across the membrane.</text>
</comment>
<comment type="catalytic activity">
    <reaction evidence="1 6 9 12">
        <text>ATP + H2O + cellular proteinSide 1 = ADP + phosphate + cellular proteinSide 2.</text>
        <dbReference type="EC" id="7.4.2.8"/>
    </reaction>
</comment>
<comment type="cofactor">
    <cofactor evidence="1 3">
        <name>Zn(2+)</name>
        <dbReference type="ChEBI" id="CHEBI:29105"/>
    </cofactor>
    <text evidence="3">Binds 1 zinc ion per subunit. Zinc is required for binding of the SecB chaperone to the extreme C-terminus of SecA.</text>
</comment>
<comment type="activity regulation">
    <text evidence="8">The translocation ATPase activity is stimulated by SecY and a precursor protein such as proOmpA.</text>
</comment>
<comment type="subunit">
    <text>Monomer and homodimer; probably dimeric in the cytoplasm. It is not yet clear whether the form that functions in protein insertion is monomeric or dimeric. Part of the essential protein translocation apparatus which comprises SecA, SecYEG and auxiliary proteins SecDF-YajC and YidC. Makes direct contact with SecY.</text>
</comment>
<comment type="interaction">
    <interactant intactId="EBI-543213">
        <id>P10408</id>
    </interactant>
    <interactant intactId="EBI-371309">
        <id>P02943</id>
        <label>lamB</label>
    </interactant>
    <organismsDiffer>false</organismsDiffer>
    <experiments>3</experiments>
</comment>
<comment type="interaction">
    <interactant intactId="EBI-543213">
        <id>P10408</id>
    </interactant>
    <interactant intactId="EBI-371347">
        <id>P0A910</id>
        <label>ompA</label>
    </interactant>
    <organismsDiffer>false</organismsDiffer>
    <experiments>2</experiments>
</comment>
<comment type="interaction">
    <interactant intactId="EBI-543213">
        <id>P10408</id>
    </interactant>
    <interactant intactId="EBI-552958">
        <id>P00634</id>
        <label>phoA</label>
    </interactant>
    <organismsDiffer>false</organismsDiffer>
    <experiments>3</experiments>
</comment>
<comment type="interaction">
    <interactant intactId="EBI-543213">
        <id>P10408</id>
    </interactant>
    <interactant intactId="EBI-543213">
        <id>P10408</id>
        <label>secA</label>
    </interactant>
    <organismsDiffer>false</organismsDiffer>
    <experiments>3</experiments>
</comment>
<comment type="interaction">
    <interactant intactId="EBI-543213">
        <id>P10408</id>
    </interactant>
    <interactant intactId="EBI-555877">
        <id>P0AG86</id>
        <label>secB</label>
    </interactant>
    <organismsDiffer>false</organismsDiffer>
    <experiments>6</experiments>
</comment>
<comment type="interaction">
    <interactant intactId="EBI-543213">
        <id>P10408</id>
    </interactant>
    <interactant intactId="EBI-6404267">
        <id>P0AG96</id>
        <label>secE</label>
    </interactant>
    <organismsDiffer>false</organismsDiffer>
    <experiments>2</experiments>
</comment>
<comment type="interaction">
    <interactant intactId="EBI-543213">
        <id>P10408</id>
    </interactant>
    <interactant intactId="EBI-6404248">
        <id>P0AG99</id>
        <label>secG</label>
    </interactant>
    <organismsDiffer>false</organismsDiffer>
    <experiments>3</experiments>
</comment>
<comment type="interaction">
    <interactant intactId="EBI-543213">
        <id>P10408</id>
    </interactant>
    <interactant intactId="EBI-761422">
        <id>P0AGA2</id>
        <label>secY</label>
    </interactant>
    <organismsDiffer>false</organismsDiffer>
    <experiments>6</experiments>
</comment>
<comment type="interaction">
    <interactant intactId="EBI-543213">
        <id>P10408</id>
    </interactant>
    <interactant intactId="EBI-543276">
        <id>P0A8Z3</id>
        <label>ybgC</label>
    </interactant>
    <organismsDiffer>false</organismsDiffer>
    <experiments>3</experiments>
</comment>
<comment type="subcellular location">
    <subcellularLocation>
        <location evidence="1">Cell inner membrane</location>
        <topology evidence="1">Peripheral membrane protein</topology>
        <orientation evidence="1">Cytoplasmic side</orientation>
    </subcellularLocation>
    <subcellularLocation>
        <location evidence="1">Cytoplasm</location>
    </subcellularLocation>
    <text evidence="1">Distribution is 50-50.</text>
</comment>
<comment type="induction">
    <text evidence="1">Repressed under conditions of excess protein secretion capacity and derepressed when protein secretion becomes limiting. This is regulated by SecM.</text>
</comment>
<comment type="disruption phenotype">
    <text evidence="5">Essential. Leads to loss of translocation of lipoproteins Lpp and BRP.</text>
</comment>
<comment type="similarity">
    <text evidence="1 11">Belongs to the SecA family.</text>
</comment>
<dbReference type="EC" id="7.4.2.8" evidence="1 6 9 12"/>
<dbReference type="EMBL" id="M20791">
    <property type="protein sequence ID" value="AAA24619.1"/>
    <property type="molecule type" value="Genomic_DNA"/>
</dbReference>
<dbReference type="EMBL" id="M19211">
    <property type="protein sequence ID" value="AAA83851.1"/>
    <property type="molecule type" value="Genomic_DNA"/>
</dbReference>
<dbReference type="EMBL" id="X55034">
    <property type="protein sequence ID" value="CAA38875.1"/>
    <property type="molecule type" value="Genomic_DNA"/>
</dbReference>
<dbReference type="EMBL" id="U00096">
    <property type="protein sequence ID" value="AAC73209.1"/>
    <property type="molecule type" value="Genomic_DNA"/>
</dbReference>
<dbReference type="EMBL" id="AP009048">
    <property type="protein sequence ID" value="BAB96666.2"/>
    <property type="molecule type" value="Genomic_DNA"/>
</dbReference>
<dbReference type="PIR" id="B64732">
    <property type="entry name" value="BVECCA"/>
</dbReference>
<dbReference type="RefSeq" id="NP_414640.1">
    <property type="nucleotide sequence ID" value="NC_000913.3"/>
</dbReference>
<dbReference type="RefSeq" id="WP_000905789.1">
    <property type="nucleotide sequence ID" value="NZ_STEB01000010.1"/>
</dbReference>
<dbReference type="PDB" id="1TM6">
    <property type="method" value="NMR"/>
    <property type="chains" value="A=880-901"/>
</dbReference>
<dbReference type="PDB" id="2FSF">
    <property type="method" value="X-ray"/>
    <property type="resolution" value="2.00 A"/>
    <property type="chains" value="A/B=9-861"/>
</dbReference>
<dbReference type="PDB" id="2FSG">
    <property type="method" value="X-ray"/>
    <property type="resolution" value="2.20 A"/>
    <property type="chains" value="A/B=9-861"/>
</dbReference>
<dbReference type="PDB" id="2FSH">
    <property type="method" value="X-ray"/>
    <property type="resolution" value="2.00 A"/>
    <property type="chains" value="A/B=9-861"/>
</dbReference>
<dbReference type="PDB" id="2FSI">
    <property type="method" value="X-ray"/>
    <property type="resolution" value="2.11 A"/>
    <property type="chains" value="A/B=9-861"/>
</dbReference>
<dbReference type="PDB" id="2VDA">
    <property type="method" value="NMR"/>
    <property type="chains" value="A=9-836"/>
</dbReference>
<dbReference type="PDB" id="3BXZ">
    <property type="method" value="X-ray"/>
    <property type="resolution" value="3.00 A"/>
    <property type="chains" value="A/B=6-609"/>
</dbReference>
<dbReference type="PDB" id="5K94">
    <property type="method" value="X-ray"/>
    <property type="resolution" value="2.10 A"/>
    <property type="chains" value="A/B=229-368"/>
</dbReference>
<dbReference type="PDB" id="5K9T">
    <property type="method" value="X-ray"/>
    <property type="resolution" value="2.60 A"/>
    <property type="chains" value="A=15-590"/>
</dbReference>
<dbReference type="PDB" id="6GOX">
    <property type="method" value="X-ray"/>
    <property type="resolution" value="3.50 A"/>
    <property type="chains" value="A=13-834"/>
</dbReference>
<dbReference type="PDBsum" id="1TM6"/>
<dbReference type="PDBsum" id="2FSF"/>
<dbReference type="PDBsum" id="2FSG"/>
<dbReference type="PDBsum" id="2FSH"/>
<dbReference type="PDBsum" id="2FSI"/>
<dbReference type="PDBsum" id="2VDA"/>
<dbReference type="PDBsum" id="3BXZ"/>
<dbReference type="PDBsum" id="5K94"/>
<dbReference type="PDBsum" id="5K9T"/>
<dbReference type="PDBsum" id="6GOX"/>
<dbReference type="SASBDB" id="P10408"/>
<dbReference type="SMR" id="P10408"/>
<dbReference type="BioGRID" id="4261117">
    <property type="interactions" value="272"/>
</dbReference>
<dbReference type="BioGRID" id="849222">
    <property type="interactions" value="4"/>
</dbReference>
<dbReference type="DIP" id="DIP-10840N"/>
<dbReference type="FunCoup" id="P10408">
    <property type="interactions" value="973"/>
</dbReference>
<dbReference type="IntAct" id="P10408">
    <property type="interactions" value="86"/>
</dbReference>
<dbReference type="MINT" id="P10408"/>
<dbReference type="STRING" id="511145.b0098"/>
<dbReference type="ChEMBL" id="CHEMBL4662929"/>
<dbReference type="TCDB" id="3.A.5.1.1">
    <property type="family name" value="the general secretory pathway (sec) family"/>
</dbReference>
<dbReference type="jPOST" id="P10408"/>
<dbReference type="PaxDb" id="511145-b0098"/>
<dbReference type="EnsemblBacteria" id="AAC73209">
    <property type="protein sequence ID" value="AAC73209"/>
    <property type="gene ID" value="b0098"/>
</dbReference>
<dbReference type="GeneID" id="93777336"/>
<dbReference type="GeneID" id="944821"/>
<dbReference type="KEGG" id="ecj:JW0096"/>
<dbReference type="KEGG" id="eco:b0098"/>
<dbReference type="KEGG" id="ecoc:C3026_00395"/>
<dbReference type="PATRIC" id="fig|1411691.4.peg.2182"/>
<dbReference type="EchoBASE" id="EB0929"/>
<dbReference type="eggNOG" id="COG0653">
    <property type="taxonomic scope" value="Bacteria"/>
</dbReference>
<dbReference type="HOGENOM" id="CLU_005314_3_0_6"/>
<dbReference type="InParanoid" id="P10408"/>
<dbReference type="OMA" id="MVHYDVQ"/>
<dbReference type="OrthoDB" id="9805579at2"/>
<dbReference type="PhylomeDB" id="P10408"/>
<dbReference type="BioCyc" id="EcoCyc:SECA"/>
<dbReference type="BRENDA" id="7.4.2.5">
    <property type="organism ID" value="2026"/>
</dbReference>
<dbReference type="EvolutionaryTrace" id="P10408"/>
<dbReference type="PRO" id="PR:P10408"/>
<dbReference type="Proteomes" id="UP000000625">
    <property type="component" value="Chromosome"/>
</dbReference>
<dbReference type="GO" id="GO:0031522">
    <property type="term" value="C:cell envelope Sec protein transport complex"/>
    <property type="evidence" value="ECO:0000314"/>
    <property type="project" value="EcoCyc"/>
</dbReference>
<dbReference type="GO" id="GO:0005737">
    <property type="term" value="C:cytoplasm"/>
    <property type="evidence" value="ECO:0000314"/>
    <property type="project" value="EcoliWiki"/>
</dbReference>
<dbReference type="GO" id="GO:0009898">
    <property type="term" value="C:cytoplasmic side of plasma membrane"/>
    <property type="evidence" value="ECO:0000314"/>
    <property type="project" value="EcoCyc"/>
</dbReference>
<dbReference type="GO" id="GO:0005886">
    <property type="term" value="C:plasma membrane"/>
    <property type="evidence" value="ECO:0000314"/>
    <property type="project" value="EcoliWiki"/>
</dbReference>
<dbReference type="GO" id="GO:0005524">
    <property type="term" value="F:ATP binding"/>
    <property type="evidence" value="ECO:0000318"/>
    <property type="project" value="GO_Central"/>
</dbReference>
<dbReference type="GO" id="GO:0042802">
    <property type="term" value="F:identical protein binding"/>
    <property type="evidence" value="ECO:0000353"/>
    <property type="project" value="IntAct"/>
</dbReference>
<dbReference type="GO" id="GO:0070678">
    <property type="term" value="F:preprotein binding"/>
    <property type="evidence" value="ECO:0000314"/>
    <property type="project" value="EcoCyc"/>
</dbReference>
<dbReference type="GO" id="GO:0008564">
    <property type="term" value="F:protein-exporting ATPase activity"/>
    <property type="evidence" value="ECO:0007669"/>
    <property type="project" value="UniProtKB-EC"/>
</dbReference>
<dbReference type="GO" id="GO:0043021">
    <property type="term" value="F:ribonucleoprotein complex binding"/>
    <property type="evidence" value="ECO:0000314"/>
    <property type="project" value="EcoCyc"/>
</dbReference>
<dbReference type="GO" id="GO:0043022">
    <property type="term" value="F:ribosome binding"/>
    <property type="evidence" value="ECO:0000353"/>
    <property type="project" value="EcoCyc"/>
</dbReference>
<dbReference type="GO" id="GO:0008270">
    <property type="term" value="F:zinc ion binding"/>
    <property type="evidence" value="ECO:0000314"/>
    <property type="project" value="EcoCyc"/>
</dbReference>
<dbReference type="GO" id="GO:0061077">
    <property type="term" value="P:chaperone-mediated protein folding"/>
    <property type="evidence" value="ECO:0000314"/>
    <property type="project" value="EcoCyc"/>
</dbReference>
<dbReference type="GO" id="GO:0065002">
    <property type="term" value="P:intracellular protein transmembrane transport"/>
    <property type="evidence" value="ECO:0000315"/>
    <property type="project" value="EcoCyc"/>
</dbReference>
<dbReference type="GO" id="GO:0017038">
    <property type="term" value="P:protein import"/>
    <property type="evidence" value="ECO:0007669"/>
    <property type="project" value="InterPro"/>
</dbReference>
<dbReference type="GO" id="GO:0009306">
    <property type="term" value="P:protein secretion"/>
    <property type="evidence" value="ECO:0000315"/>
    <property type="project" value="EcoCyc"/>
</dbReference>
<dbReference type="GO" id="GO:0006605">
    <property type="term" value="P:protein targeting"/>
    <property type="evidence" value="ECO:0000315"/>
    <property type="project" value="EcoliWiki"/>
</dbReference>
<dbReference type="GO" id="GO:0006612">
    <property type="term" value="P:protein targeting to membrane"/>
    <property type="evidence" value="ECO:0000314"/>
    <property type="project" value="EcoCyc"/>
</dbReference>
<dbReference type="GO" id="GO:0015031">
    <property type="term" value="P:protein transport"/>
    <property type="evidence" value="ECO:0000315"/>
    <property type="project" value="EcoliWiki"/>
</dbReference>
<dbReference type="GO" id="GO:0043952">
    <property type="term" value="P:protein transport by the Sec complex"/>
    <property type="evidence" value="ECO:0000314"/>
    <property type="project" value="EcoCyc"/>
</dbReference>
<dbReference type="CDD" id="cd17928">
    <property type="entry name" value="DEXDc_SecA"/>
    <property type="match status" value="1"/>
</dbReference>
<dbReference type="CDD" id="cd18803">
    <property type="entry name" value="SF2_C_secA"/>
    <property type="match status" value="1"/>
</dbReference>
<dbReference type="FunFam" id="1.10.3060.10:FF:000001">
    <property type="entry name" value="Preprotein translocase subunit SecA"/>
    <property type="match status" value="1"/>
</dbReference>
<dbReference type="FunFam" id="3.40.50.300:FF:000081">
    <property type="entry name" value="Preprotein translocase subunit SecA"/>
    <property type="match status" value="1"/>
</dbReference>
<dbReference type="FunFam" id="3.40.50.300:FF:000113">
    <property type="entry name" value="Preprotein translocase subunit SecA"/>
    <property type="match status" value="1"/>
</dbReference>
<dbReference type="FunFam" id="3.90.1440.10:FF:000001">
    <property type="entry name" value="Preprotein translocase subunit SecA"/>
    <property type="match status" value="1"/>
</dbReference>
<dbReference type="Gene3D" id="1.10.3060.10">
    <property type="entry name" value="Helical scaffold and wing domains of SecA"/>
    <property type="match status" value="1"/>
</dbReference>
<dbReference type="Gene3D" id="3.40.50.300">
    <property type="entry name" value="P-loop containing nucleotide triphosphate hydrolases"/>
    <property type="match status" value="2"/>
</dbReference>
<dbReference type="Gene3D" id="3.90.1440.10">
    <property type="entry name" value="SecA, preprotein cross-linking domain"/>
    <property type="match status" value="1"/>
</dbReference>
<dbReference type="HAMAP" id="MF_01382">
    <property type="entry name" value="SecA"/>
    <property type="match status" value="1"/>
</dbReference>
<dbReference type="InterPro" id="IPR014001">
    <property type="entry name" value="Helicase_ATP-bd"/>
</dbReference>
<dbReference type="InterPro" id="IPR001650">
    <property type="entry name" value="Helicase_C-like"/>
</dbReference>
<dbReference type="InterPro" id="IPR027417">
    <property type="entry name" value="P-loop_NTPase"/>
</dbReference>
<dbReference type="InterPro" id="IPR004027">
    <property type="entry name" value="SEC_C_motif"/>
</dbReference>
<dbReference type="InterPro" id="IPR000185">
    <property type="entry name" value="SecA"/>
</dbReference>
<dbReference type="InterPro" id="IPR020937">
    <property type="entry name" value="SecA_CS"/>
</dbReference>
<dbReference type="InterPro" id="IPR011115">
    <property type="entry name" value="SecA_DEAD"/>
</dbReference>
<dbReference type="InterPro" id="IPR014018">
    <property type="entry name" value="SecA_motor_DEAD"/>
</dbReference>
<dbReference type="InterPro" id="IPR011130">
    <property type="entry name" value="SecA_preprotein_X-link_dom"/>
</dbReference>
<dbReference type="InterPro" id="IPR044722">
    <property type="entry name" value="SecA_SF2_C"/>
</dbReference>
<dbReference type="InterPro" id="IPR011116">
    <property type="entry name" value="SecA_Wing/Scaffold"/>
</dbReference>
<dbReference type="InterPro" id="IPR036266">
    <property type="entry name" value="SecA_Wing/Scaffold_sf"/>
</dbReference>
<dbReference type="InterPro" id="IPR036670">
    <property type="entry name" value="SecA_X-link_sf"/>
</dbReference>
<dbReference type="NCBIfam" id="NF009538">
    <property type="entry name" value="PRK12904.1"/>
    <property type="match status" value="1"/>
</dbReference>
<dbReference type="NCBIfam" id="TIGR00963">
    <property type="entry name" value="secA"/>
    <property type="match status" value="1"/>
</dbReference>
<dbReference type="PANTHER" id="PTHR30612:SF0">
    <property type="entry name" value="CHLOROPLAST PROTEIN-TRANSPORTING ATPASE"/>
    <property type="match status" value="1"/>
</dbReference>
<dbReference type="PANTHER" id="PTHR30612">
    <property type="entry name" value="SECA INNER MEMBRANE COMPONENT OF SEC PROTEIN SECRETION SYSTEM"/>
    <property type="match status" value="1"/>
</dbReference>
<dbReference type="Pfam" id="PF21090">
    <property type="entry name" value="P-loop_SecA"/>
    <property type="match status" value="1"/>
</dbReference>
<dbReference type="Pfam" id="PF02810">
    <property type="entry name" value="SEC-C"/>
    <property type="match status" value="1"/>
</dbReference>
<dbReference type="Pfam" id="PF07517">
    <property type="entry name" value="SecA_DEAD"/>
    <property type="match status" value="1"/>
</dbReference>
<dbReference type="Pfam" id="PF01043">
    <property type="entry name" value="SecA_PP_bind"/>
    <property type="match status" value="1"/>
</dbReference>
<dbReference type="Pfam" id="PF07516">
    <property type="entry name" value="SecA_SW"/>
    <property type="match status" value="1"/>
</dbReference>
<dbReference type="PRINTS" id="PR00906">
    <property type="entry name" value="SECA"/>
</dbReference>
<dbReference type="SMART" id="SM00957">
    <property type="entry name" value="SecA_DEAD"/>
    <property type="match status" value="1"/>
</dbReference>
<dbReference type="SMART" id="SM00958">
    <property type="entry name" value="SecA_PP_bind"/>
    <property type="match status" value="1"/>
</dbReference>
<dbReference type="SUPFAM" id="SSF81886">
    <property type="entry name" value="Helical scaffold and wing domains of SecA"/>
    <property type="match status" value="1"/>
</dbReference>
<dbReference type="SUPFAM" id="SSF52540">
    <property type="entry name" value="P-loop containing nucleoside triphosphate hydrolases"/>
    <property type="match status" value="2"/>
</dbReference>
<dbReference type="SUPFAM" id="SSF81767">
    <property type="entry name" value="Pre-protein crosslinking domain of SecA"/>
    <property type="match status" value="1"/>
</dbReference>
<dbReference type="PROSITE" id="PS01312">
    <property type="entry name" value="SECA"/>
    <property type="match status" value="1"/>
</dbReference>
<dbReference type="PROSITE" id="PS51196">
    <property type="entry name" value="SECA_MOTOR_DEAD"/>
    <property type="match status" value="1"/>
</dbReference>
<gene>
    <name evidence="1" type="primary">secA</name>
    <name type="synonym">azi</name>
    <name type="synonym">pea</name>
    <name type="synonym">prlD</name>
    <name type="ordered locus">b0098</name>
    <name type="ordered locus">JW0096</name>
</gene>
<evidence type="ECO:0000255" key="1">
    <source>
        <dbReference type="HAMAP-Rule" id="MF_01382"/>
    </source>
</evidence>
<evidence type="ECO:0000256" key="2">
    <source>
        <dbReference type="SAM" id="MobiDB-lite"/>
    </source>
</evidence>
<evidence type="ECO:0000269" key="3">
    <source>
    </source>
</evidence>
<evidence type="ECO:0000269" key="4">
    <source>
    </source>
</evidence>
<evidence type="ECO:0000269" key="5">
    <source>
    </source>
</evidence>
<evidence type="ECO:0000269" key="6">
    <source>
    </source>
</evidence>
<evidence type="ECO:0000269" key="7">
    <source>
    </source>
</evidence>
<evidence type="ECO:0000269" key="8">
    <source>
    </source>
</evidence>
<evidence type="ECO:0000269" key="9">
    <source>
    </source>
</evidence>
<evidence type="ECO:0000269" key="10">
    <source>
    </source>
</evidence>
<evidence type="ECO:0000305" key="11"/>
<evidence type="ECO:0000305" key="12">
    <source>
    </source>
</evidence>
<evidence type="ECO:0007829" key="13">
    <source>
        <dbReference type="PDB" id="1TM6"/>
    </source>
</evidence>
<evidence type="ECO:0007829" key="14">
    <source>
        <dbReference type="PDB" id="2FSF"/>
    </source>
</evidence>
<evidence type="ECO:0007829" key="15">
    <source>
        <dbReference type="PDB" id="2FSI"/>
    </source>
</evidence>
<evidence type="ECO:0007829" key="16">
    <source>
        <dbReference type="PDB" id="2VDA"/>
    </source>
</evidence>
<evidence type="ECO:0007829" key="17">
    <source>
        <dbReference type="PDB" id="3BXZ"/>
    </source>
</evidence>
<evidence type="ECO:0007829" key="18">
    <source>
        <dbReference type="PDB" id="5K94"/>
    </source>
</evidence>
<evidence type="ECO:0007829" key="19">
    <source>
        <dbReference type="PDB" id="5K9T"/>
    </source>
</evidence>
<evidence type="ECO:0007829" key="20">
    <source>
        <dbReference type="PDB" id="6GOX"/>
    </source>
</evidence>
<feature type="chain" id="PRO_0000109585" description="Protein translocase subunit SecA">
    <location>
        <begin position="1"/>
        <end position="901"/>
    </location>
</feature>
<feature type="region of interest" description="Disordered" evidence="2">
    <location>
        <begin position="859"/>
        <end position="901"/>
    </location>
</feature>
<feature type="compositionally biased region" description="Basic residues" evidence="2">
    <location>
        <begin position="891"/>
        <end position="901"/>
    </location>
</feature>
<feature type="binding site" evidence="1">
    <location>
        <position position="87"/>
    </location>
    <ligand>
        <name>ATP</name>
        <dbReference type="ChEBI" id="CHEBI:30616"/>
    </ligand>
</feature>
<feature type="binding site" evidence="1">
    <location>
        <begin position="105"/>
        <end position="109"/>
    </location>
    <ligand>
        <name>ATP</name>
        <dbReference type="ChEBI" id="CHEBI:30616"/>
    </ligand>
</feature>
<feature type="binding site" evidence="1">
    <location>
        <position position="512"/>
    </location>
    <ligand>
        <name>ATP</name>
        <dbReference type="ChEBI" id="CHEBI:30616"/>
    </ligand>
</feature>
<feature type="binding site" evidence="1">
    <location>
        <position position="885"/>
    </location>
    <ligand>
        <name>Zn(2+)</name>
        <dbReference type="ChEBI" id="CHEBI:29105"/>
    </ligand>
</feature>
<feature type="binding site" evidence="1">
    <location>
        <position position="887"/>
    </location>
    <ligand>
        <name>Zn(2+)</name>
        <dbReference type="ChEBI" id="CHEBI:29105"/>
    </ligand>
</feature>
<feature type="binding site" evidence="1">
    <location>
        <position position="896"/>
    </location>
    <ligand>
        <name>Zn(2+)</name>
        <dbReference type="ChEBI" id="CHEBI:29105"/>
    </ligand>
</feature>
<feature type="binding site" evidence="1">
    <location>
        <position position="897"/>
    </location>
    <ligand>
        <name>Zn(2+)</name>
        <dbReference type="ChEBI" id="CHEBI:29105"/>
    </ligand>
</feature>
<feature type="sequence conflict" description="In Ref. 1; AA sequence." evidence="11" ref="1">
    <original>R</original>
    <variation>G</variation>
    <location>
        <position position="19"/>
    </location>
</feature>
<feature type="sequence conflict" description="In Ref. 1; AAA24619 and 2; CAA38875." evidence="11" ref="1 2">
    <original>ER</original>
    <variation>DG</variation>
    <location>
        <begin position="737"/>
        <end position="738"/>
    </location>
</feature>
<feature type="helix" evidence="14">
    <location>
        <begin position="14"/>
        <end position="30"/>
    </location>
</feature>
<feature type="helix" evidence="14">
    <location>
        <begin position="32"/>
        <end position="37"/>
    </location>
</feature>
<feature type="helix" evidence="14">
    <location>
        <begin position="40"/>
        <end position="55"/>
    </location>
</feature>
<feature type="helix" evidence="14">
    <location>
        <begin position="60"/>
        <end position="79"/>
    </location>
</feature>
<feature type="helix" evidence="14">
    <location>
        <begin position="85"/>
        <end position="95"/>
    </location>
</feature>
<feature type="strand" evidence="14">
    <location>
        <begin position="96"/>
        <end position="101"/>
    </location>
</feature>
<feature type="helix" evidence="14">
    <location>
        <begin position="108"/>
        <end position="120"/>
    </location>
</feature>
<feature type="strand" evidence="17">
    <location>
        <begin position="122"/>
        <end position="124"/>
    </location>
</feature>
<feature type="strand" evidence="14">
    <location>
        <begin position="127"/>
        <end position="132"/>
    </location>
</feature>
<feature type="helix" evidence="14">
    <location>
        <begin position="133"/>
        <end position="149"/>
    </location>
</feature>
<feature type="strand" evidence="14">
    <location>
        <begin position="154"/>
        <end position="156"/>
    </location>
</feature>
<feature type="helix" evidence="14">
    <location>
        <begin position="163"/>
        <end position="171"/>
    </location>
</feature>
<feature type="strand" evidence="14">
    <location>
        <begin position="172"/>
        <end position="178"/>
    </location>
</feature>
<feature type="helix" evidence="14">
    <location>
        <begin position="179"/>
        <end position="189"/>
    </location>
</feature>
<feature type="helix" evidence="14">
    <location>
        <begin position="195"/>
        <end position="197"/>
    </location>
</feature>
<feature type="strand" evidence="14">
    <location>
        <begin position="205"/>
        <end position="209"/>
    </location>
</feature>
<feature type="helix" evidence="14">
    <location>
        <begin position="211"/>
        <end position="214"/>
    </location>
</feature>
<feature type="turn" evidence="14">
    <location>
        <begin position="215"/>
        <end position="220"/>
    </location>
</feature>
<feature type="strand" evidence="14">
    <location>
        <begin position="222"/>
        <end position="227"/>
    </location>
</feature>
<feature type="helix" evidence="18">
    <location>
        <begin position="232"/>
        <end position="240"/>
    </location>
</feature>
<feature type="helix" evidence="18">
    <location>
        <begin position="243"/>
        <end position="245"/>
    </location>
</feature>
<feature type="strand" evidence="18">
    <location>
        <begin position="248"/>
        <end position="251"/>
    </location>
</feature>
<feature type="strand" evidence="18">
    <location>
        <begin position="260"/>
        <end position="266"/>
    </location>
</feature>
<feature type="turn" evidence="18">
    <location>
        <begin position="267"/>
        <end position="270"/>
    </location>
</feature>
<feature type="strand" evidence="18">
    <location>
        <begin position="271"/>
        <end position="274"/>
    </location>
</feature>
<feature type="helix" evidence="14">
    <location>
        <begin position="281"/>
        <end position="286"/>
    </location>
</feature>
<feature type="strand" evidence="14">
    <location>
        <begin position="287"/>
        <end position="289"/>
    </location>
</feature>
<feature type="strand" evidence="15">
    <location>
        <begin position="290"/>
        <end position="292"/>
    </location>
</feature>
<feature type="turn" evidence="14">
    <location>
        <begin position="293"/>
        <end position="295"/>
    </location>
</feature>
<feature type="strand" evidence="14">
    <location>
        <begin position="300"/>
        <end position="302"/>
    </location>
</feature>
<feature type="helix" evidence="14">
    <location>
        <begin position="304"/>
        <end position="312"/>
    </location>
</feature>
<feature type="turn" evidence="16">
    <location>
        <begin position="315"/>
        <end position="317"/>
    </location>
</feature>
<feature type="strand" evidence="20">
    <location>
        <begin position="318"/>
        <end position="320"/>
    </location>
</feature>
<feature type="turn" evidence="18">
    <location>
        <begin position="322"/>
        <end position="324"/>
    </location>
</feature>
<feature type="strand" evidence="18">
    <location>
        <begin position="325"/>
        <end position="329"/>
    </location>
</feature>
<feature type="strand" evidence="18">
    <location>
        <begin position="332"/>
        <end position="335"/>
    </location>
</feature>
<feature type="turn" evidence="16">
    <location>
        <begin position="338"/>
        <end position="340"/>
    </location>
</feature>
<feature type="strand" evidence="16">
    <location>
        <begin position="343"/>
        <end position="346"/>
    </location>
</feature>
<feature type="turn" evidence="19">
    <location>
        <begin position="350"/>
        <end position="352"/>
    </location>
</feature>
<feature type="helix" evidence="18">
    <location>
        <begin position="353"/>
        <end position="361"/>
    </location>
</feature>
<feature type="strand" evidence="14">
    <location>
        <begin position="370"/>
        <end position="376"/>
    </location>
</feature>
<feature type="helix" evidence="14">
    <location>
        <begin position="377"/>
        <end position="381"/>
    </location>
</feature>
<feature type="strand" evidence="14">
    <location>
        <begin position="384"/>
        <end position="391"/>
    </location>
</feature>
<feature type="helix" evidence="19">
    <location>
        <begin position="395"/>
        <end position="397"/>
    </location>
</feature>
<feature type="helix" evidence="14">
    <location>
        <begin position="398"/>
        <end position="405"/>
    </location>
</feature>
<feature type="strand" evidence="14">
    <location>
        <begin position="408"/>
        <end position="411"/>
    </location>
</feature>
<feature type="strand" evidence="20">
    <location>
        <begin position="420"/>
        <end position="422"/>
    </location>
</feature>
<feature type="strand" evidence="14">
    <location>
        <begin position="426"/>
        <end position="430"/>
    </location>
</feature>
<feature type="helix" evidence="14">
    <location>
        <begin position="431"/>
        <end position="446"/>
    </location>
</feature>
<feature type="turn" evidence="14">
    <location>
        <begin position="447"/>
        <end position="449"/>
    </location>
</feature>
<feature type="strand" evidence="14">
    <location>
        <begin position="452"/>
        <end position="458"/>
    </location>
</feature>
<feature type="helix" evidence="14">
    <location>
        <begin position="459"/>
        <end position="471"/>
    </location>
</feature>
<feature type="strand" evidence="19">
    <location>
        <begin position="477"/>
        <end position="479"/>
    </location>
</feature>
<feature type="strand" evidence="19">
    <location>
        <begin position="481"/>
        <end position="483"/>
    </location>
</feature>
<feature type="helix" evidence="14">
    <location>
        <begin position="484"/>
        <end position="492"/>
    </location>
</feature>
<feature type="turn" evidence="14">
    <location>
        <begin position="493"/>
        <end position="495"/>
    </location>
</feature>
<feature type="strand" evidence="17">
    <location>
        <begin position="496"/>
        <end position="498"/>
    </location>
</feature>
<feature type="strand" evidence="14">
    <location>
        <begin position="500"/>
        <end position="505"/>
    </location>
</feature>
<feature type="helix" evidence="14">
    <location>
        <begin position="519"/>
        <end position="525"/>
    </location>
</feature>
<feature type="strand" evidence="19">
    <location>
        <begin position="526"/>
        <end position="528"/>
    </location>
</feature>
<feature type="helix" evidence="14">
    <location>
        <begin position="533"/>
        <end position="550"/>
    </location>
</feature>
<feature type="strand" evidence="14">
    <location>
        <begin position="553"/>
        <end position="560"/>
    </location>
</feature>
<feature type="helix" evidence="14">
    <location>
        <begin position="565"/>
        <end position="572"/>
    </location>
</feature>
<feature type="helix" evidence="14">
    <location>
        <begin position="577"/>
        <end position="579"/>
    </location>
</feature>
<feature type="strand" evidence="14">
    <location>
        <begin position="582"/>
        <end position="589"/>
    </location>
</feature>
<feature type="helix" evidence="17">
    <location>
        <begin position="590"/>
        <end position="592"/>
    </location>
</feature>
<feature type="helix" evidence="14">
    <location>
        <begin position="593"/>
        <end position="596"/>
    </location>
</feature>
<feature type="strand" evidence="16">
    <location>
        <begin position="597"/>
        <end position="599"/>
    </location>
</feature>
<feature type="helix" evidence="14">
    <location>
        <begin position="601"/>
        <end position="604"/>
    </location>
</feature>
<feature type="helix" evidence="14">
    <location>
        <begin position="605"/>
        <end position="610"/>
    </location>
</feature>
<feature type="turn" evidence="20">
    <location>
        <begin position="613"/>
        <end position="615"/>
    </location>
</feature>
<feature type="helix" evidence="14">
    <location>
        <begin position="621"/>
        <end position="668"/>
    </location>
</feature>
<feature type="helix" evidence="14">
    <location>
        <begin position="673"/>
        <end position="689"/>
    </location>
</feature>
<feature type="helix" evidence="14">
    <location>
        <begin position="698"/>
        <end position="700"/>
    </location>
</feature>
<feature type="helix" evidence="14">
    <location>
        <begin position="703"/>
        <end position="714"/>
    </location>
</feature>
<feature type="helix" evidence="14">
    <location>
        <begin position="720"/>
        <end position="726"/>
    </location>
</feature>
<feature type="helix" evidence="16">
    <location>
        <begin position="728"/>
        <end position="730"/>
    </location>
</feature>
<feature type="helix" evidence="14">
    <location>
        <begin position="732"/>
        <end position="754"/>
    </location>
</feature>
<feature type="helix" evidence="14">
    <location>
        <begin position="756"/>
        <end position="787"/>
    </location>
</feature>
<feature type="turn" evidence="14">
    <location>
        <begin position="788"/>
        <end position="790"/>
    </location>
</feature>
<feature type="strand" evidence="14">
    <location>
        <begin position="791"/>
        <end position="793"/>
    </location>
</feature>
<feature type="strand" evidence="14">
    <location>
        <begin position="795"/>
        <end position="797"/>
    </location>
</feature>
<feature type="turn" evidence="14">
    <location>
        <begin position="799"/>
        <end position="801"/>
    </location>
</feature>
<feature type="helix" evidence="14">
    <location>
        <begin position="802"/>
        <end position="828"/>
    </location>
</feature>
<feature type="turn" evidence="13">
    <location>
        <begin position="884"/>
        <end position="887"/>
    </location>
</feature>
<feature type="strand" evidence="13">
    <location>
        <begin position="889"/>
        <end position="891"/>
    </location>
</feature>
<feature type="helix" evidence="13">
    <location>
        <begin position="892"/>
        <end position="896"/>
    </location>
</feature>
<proteinExistence type="evidence at protein level"/>
<organism>
    <name type="scientific">Escherichia coli (strain K12)</name>
    <dbReference type="NCBI Taxonomy" id="83333"/>
    <lineage>
        <taxon>Bacteria</taxon>
        <taxon>Pseudomonadati</taxon>
        <taxon>Pseudomonadota</taxon>
        <taxon>Gammaproteobacteria</taxon>
        <taxon>Enterobacterales</taxon>
        <taxon>Enterobacteriaceae</taxon>
        <taxon>Escherichia</taxon>
    </lineage>
</organism>
<name>SECA_ECOLI</name>
<protein>
    <recommendedName>
        <fullName evidence="1 11">Protein translocase subunit SecA</fullName>
        <ecNumber evidence="1 6 9 12">7.4.2.8</ecNumber>
    </recommendedName>
</protein>
<keyword id="KW-0002">3D-structure</keyword>
<keyword id="KW-0067">ATP-binding</keyword>
<keyword id="KW-0997">Cell inner membrane</keyword>
<keyword id="KW-1003">Cell membrane</keyword>
<keyword id="KW-0963">Cytoplasm</keyword>
<keyword id="KW-0903">Direct protein sequencing</keyword>
<keyword id="KW-0472">Membrane</keyword>
<keyword id="KW-0479">Metal-binding</keyword>
<keyword id="KW-0547">Nucleotide-binding</keyword>
<keyword id="KW-0653">Protein transport</keyword>
<keyword id="KW-1185">Reference proteome</keyword>
<keyword id="KW-1278">Translocase</keyword>
<keyword id="KW-0811">Translocation</keyword>
<keyword id="KW-0813">Transport</keyword>
<keyword id="KW-0862">Zinc</keyword>
<reference key="1">
    <citation type="journal article" date="1988" name="J. Bacteriol.">
        <title>Nucleotide sequence of the secA gene and secA(Ts) mutations preventing protein export in Escherichia coli.</title>
        <authorList>
            <person name="Schmidt M."/>
            <person name="Rollo E."/>
            <person name="Grodberg J."/>
            <person name="Oliver D."/>
        </authorList>
    </citation>
    <scope>NUCLEOTIDE SEQUENCE [GENOMIC DNA]</scope>
    <scope>PROTEIN SEQUENCE OF 1-25</scope>
    <source>
        <strain>K12 / MC4100 / ATCC 35695 / DSM 6574</strain>
    </source>
</reference>
<reference key="2">
    <citation type="journal article" date="1992" name="Nucleic Acids Res.">
        <title>Systematic sequencing of the Escherichia coli genome: analysis of the 0-2.4 min region.</title>
        <authorList>
            <person name="Yura T."/>
            <person name="Mori H."/>
            <person name="Nagai H."/>
            <person name="Nagata T."/>
            <person name="Ishihama A."/>
            <person name="Fujita N."/>
            <person name="Isono K."/>
            <person name="Mizobuchi K."/>
            <person name="Nakata A."/>
        </authorList>
    </citation>
    <scope>NUCLEOTIDE SEQUENCE [LARGE SCALE GENOMIC DNA]</scope>
    <source>
        <strain>K12</strain>
    </source>
</reference>
<reference key="3">
    <citation type="journal article" date="1997" name="Science">
        <title>The complete genome sequence of Escherichia coli K-12.</title>
        <authorList>
            <person name="Blattner F.R."/>
            <person name="Plunkett G. III"/>
            <person name="Bloch C.A."/>
            <person name="Perna N.T."/>
            <person name="Burland V."/>
            <person name="Riley M."/>
            <person name="Collado-Vides J."/>
            <person name="Glasner J.D."/>
            <person name="Rode C.K."/>
            <person name="Mayhew G.F."/>
            <person name="Gregor J."/>
            <person name="Davis N.W."/>
            <person name="Kirkpatrick H.A."/>
            <person name="Goeden M.A."/>
            <person name="Rose D.J."/>
            <person name="Mau B."/>
            <person name="Shao Y."/>
        </authorList>
    </citation>
    <scope>NUCLEOTIDE SEQUENCE [LARGE SCALE GENOMIC DNA]</scope>
    <source>
        <strain>K12 / MG1655 / ATCC 47076</strain>
    </source>
</reference>
<reference key="4">
    <citation type="journal article" date="2006" name="Mol. Syst. Biol.">
        <title>Highly accurate genome sequences of Escherichia coli K-12 strains MG1655 and W3110.</title>
        <authorList>
            <person name="Hayashi K."/>
            <person name="Morooka N."/>
            <person name="Yamamoto Y."/>
            <person name="Fujita K."/>
            <person name="Isono K."/>
            <person name="Choi S."/>
            <person name="Ohtsubo E."/>
            <person name="Baba T."/>
            <person name="Wanner B.L."/>
            <person name="Mori H."/>
            <person name="Horiuchi T."/>
        </authorList>
    </citation>
    <scope>NUCLEOTIDE SEQUENCE [LARGE SCALE GENOMIC DNA]</scope>
    <scope>SEQUENCE REVISION TO 737-738</scope>
    <source>
        <strain>K12 / W3110 / ATCC 27325 / DSM 5911</strain>
    </source>
</reference>
<reference key="5">
    <citation type="journal article" date="1987" name="J. Bacteriol.">
        <title>Sequence analysis, transcriptional organization, and insertional mutagenesis of the envA gene of Escherichia coli.</title>
        <authorList>
            <person name="Beall B."/>
            <person name="Lutkenhaus J."/>
        </authorList>
    </citation>
    <scope>NUCLEOTIDE SEQUENCE [GENOMIC DNA] OF 1-67</scope>
    <source>
        <strain>K12</strain>
    </source>
</reference>
<reference key="6">
    <citation type="journal article" date="1988" name="Cell">
        <title>SecA protein is required for secretory protein translocation into E. coli membrane vesicles.</title>
        <authorList>
            <person name="Cabelli R.J."/>
            <person name="Chen L."/>
            <person name="Tai P.C."/>
            <person name="Oliver D.B."/>
        </authorList>
    </citation>
    <scope>FUNCTION</scope>
</reference>
<reference key="7">
    <citation type="journal article" date="1989" name="EMBO J.">
        <title>SecA protein hydrolyzes ATP and is an essential component of the protein translocation ATPase of Escherichia coli.</title>
        <authorList>
            <person name="Lill R."/>
            <person name="Cunningham K."/>
            <person name="Brundage L.A."/>
            <person name="Ito K."/>
            <person name="Oliver D."/>
            <person name="Wickner W."/>
        </authorList>
    </citation>
    <scope>ATP HYDROLYSIS</scope>
    <scope>CATALYTIC ACTIVITY</scope>
</reference>
<reference key="8">
    <citation type="journal article" date="1990" name="Cell">
        <title>The ATPase activity of SecA is regulated by acidic phospholipids, SecY, and the leader and mature domains of precursor proteins.</title>
        <authorList>
            <person name="Lill R."/>
            <person name="Dowhan W."/>
            <person name="Wickner W."/>
        </authorList>
    </citation>
    <scope>CATALYTIC ACTIVITY</scope>
    <scope>ACTIVITY REGULATION</scope>
</reference>
<reference key="9">
    <citation type="journal article" date="1991" name="Cell">
        <title>Delta mu H+ and ATP function at different steps of the catalytic cycle of preprotein translocase.</title>
        <authorList>
            <person name="Schiebel E."/>
            <person name="Driessen A.J."/>
            <person name="Hartl F.U."/>
            <person name="Wickner W."/>
        </authorList>
    </citation>
    <scope>FUNCTION</scope>
    <scope>CATALYTIC ACTIVITY</scope>
</reference>
<reference key="10">
    <citation type="journal article" date="1991" name="Proc. Natl. Acad. Sci. U.S.A.">
        <title>Reconstitution of a protein translocation system containing purified SecY, SecE, and SecA from Escherichia coli.</title>
        <authorList>
            <person name="Akimaru J."/>
            <person name="Matsuyama S."/>
            <person name="Tokuda H."/>
            <person name="Mizushima S."/>
        </authorList>
    </citation>
    <scope>FUNCTION</scope>
</reference>
<reference key="11">
    <citation type="journal article" date="1999" name="Biochemistry">
        <title>Zinc stabilizes the SecB binding site of SecA.</title>
        <authorList>
            <person name="Fekkes P."/>
            <person name="de Wit J.G."/>
            <person name="Boorsma A."/>
            <person name="Friesen R.H.E."/>
            <person name="Driessen A.J.M."/>
        </authorList>
    </citation>
    <scope>COFACTOR</scope>
</reference>
<reference key="12">
    <citation type="journal article" date="2000" name="Mol. Microbiol.">
        <title>Escherichia coli translocase: the unravelling of a molecular machine.</title>
        <authorList>
            <person name="Manting E.H."/>
            <person name="Driessen A.J."/>
        </authorList>
    </citation>
    <scope>FUNCTION</scope>
    <scope>REVIEW</scope>
</reference>
<reference key="13">
    <citation type="journal article" date="2002" name="EMBO J.">
        <title>Dissociation of the dimeric SecA ATPase during protein translocation across the bacterial membrane.</title>
        <authorList>
            <person name="Or E."/>
            <person name="Navon A."/>
            <person name="Rapoport T."/>
        </authorList>
    </citation>
    <scope>DIMER DISSOCIATION IN THE PRESENCE OF ACIDIC PHOSPHOLIPIDS</scope>
    <scope>DETERGENTS</scope>
    <scope>SYNTHETIC SIGNAL PEPTIDES</scope>
</reference>
<reference key="14">
    <citation type="journal article" date="2003" name="EMBO J.">
        <title>Binding, activation and dissociation of the dimeric SecA ATPase at the dimeric SecYEG translocase.</title>
        <authorList>
            <person name="Duong F."/>
        </authorList>
    </citation>
    <scope>ASSOCIATION OF MONOMER WITH SECYEG TRANSLOCATION COMPLEX</scope>
</reference>
<reference key="15">
    <citation type="journal article" date="2003" name="J. Biol. Chem.">
        <title>Phospholipid-induced monomerization and signal-peptide-induced oligomerization of SecA.</title>
        <authorList>
            <person name="Benach J."/>
            <person name="Chou Y.T."/>
            <person name="Fak J.J."/>
            <person name="Itkin A."/>
            <person name="Nicolae D.D."/>
            <person name="Smith P.C."/>
            <person name="Wittrock G."/>
            <person name="Floyd D.L."/>
            <person name="Golsaz C.M."/>
            <person name="Gierasch L.M."/>
            <person name="Hunt J.F."/>
        </authorList>
    </citation>
    <scope>ACIDIC PHOSPHOLIPIDS</scope>
    <scope>SYNTHETIC SIGNAL PEPTIDES</scope>
    <scope>OLIGOMERIZATION STATE OF SECA</scope>
</reference>
<reference key="16">
    <citation type="journal article" date="2003" name="J. Mol. Biol.">
        <title>Nucleotide binding induces changes in the oligomeric state and conformation of Sec A in a lipid environment: a small-angle neutron-scattering study.</title>
        <authorList>
            <person name="Bu Z."/>
            <person name="Wang L."/>
            <person name="Kendall D.A."/>
        </authorList>
    </citation>
    <scope>NUCLEOTIDE TURNOVER</scope>
    <scope>OLIGOMERIZATION STATE OF SECA</scope>
</reference>
<reference key="17">
    <citation type="journal article" date="2004" name="J. Biol. Chem.">
        <title>Targeting and translocation of two lipoproteins in Escherichia coli via the SRP/Sec/YidC pathway.</title>
        <authorList>
            <person name="Froderberg L."/>
            <person name="Houben E.N."/>
            <person name="Baars L."/>
            <person name="Luirink J."/>
            <person name="de Gier J.W."/>
        </authorList>
    </citation>
    <scope>FUNCTION IN LIPOPROTEIN EXPORT</scope>
    <scope>DISRUPTION PHENOTYPE</scope>
</reference>
<reference key="18">
    <citation type="journal article" date="2007" name="Cell">
        <title>Protein translocation is mediated by oligomers of the SecY complex with one SecY copy forming the channel.</title>
        <authorList>
            <person name="Osborne A.R."/>
            <person name="Rapoport T.A."/>
        </authorList>
    </citation>
    <scope>INTERACTION WITH SECY</scope>
</reference>
<reference key="19">
    <citation type="journal article" date="2007" name="EMBO J.">
        <title>Preprotein-controlled catalysis in the helicase motor of SecA.</title>
        <authorList>
            <person name="Karamanou S."/>
            <person name="Gouridis G."/>
            <person name="Papanikou E."/>
            <person name="Sianidis G."/>
            <person name="Gelis I."/>
            <person name="Keramisanou D."/>
            <person name="Vrontou E."/>
            <person name="Kalodimos C.G."/>
            <person name="Economou A."/>
        </authorList>
    </citation>
    <scope>CONTROL OF ATPASE ACTIVITY</scope>
</reference>
<reference key="20">
    <citation type="journal article" date="2004" name="Biochim. Biophys. Acta">
        <title>NMR structure of the C-terminal domain of SecA in the free state.</title>
        <authorList>
            <person name="Matousek W.M."/>
            <person name="Alexandrescu A.T."/>
        </authorList>
    </citation>
    <scope>STRUCTURE BY NMR OF 880-901</scope>
</reference>
<reference key="21">
    <citation type="journal article" date="2007" name="J. Mol. Biol.">
        <title>Structure of dimeric SecA, the Escherichia coli preprotein translocase motor.</title>
        <authorList>
            <person name="Papanikolau Y."/>
            <person name="Papadovasilaki M."/>
            <person name="Ravelli R.B.G."/>
            <person name="McCarthy A.A."/>
            <person name="Cusack S."/>
            <person name="Economou A."/>
            <person name="Petratos K."/>
        </authorList>
    </citation>
    <scope>X-RAY CRYSTALLOGRAPHY (2.0 ANGSTROMS) OF 9-861 AS A DIMERIC APOPROTEIN</scope>
    <scope>AS A NUCLEOTIDE-BOUND DIMER</scope>
</reference>
<reference key="22">
    <citation type="journal article" date="2004" name="Curr. Opin. Microbiol.">
        <title>Control of SecA and SecM translation by protein secretion.</title>
        <authorList>
            <person name="Nakatogawa H."/>
            <person name="Murakami A."/>
            <person name="Ito K."/>
        </authorList>
    </citation>
    <scope>REVIEW OF PROTEIN SECRETION CONTROL OF SECA EXPRESSION</scope>
</reference>
<reference key="23">
    <citation type="journal article" date="2007" name="Nat. Rev. Microbiol.">
        <title>Bacterial protein secretion through the translocase nanomachine.</title>
        <authorList>
            <person name="Papanikou E."/>
            <person name="Karamanou S."/>
            <person name="Economou A."/>
        </authorList>
    </citation>
    <scope>REVIEW OF PROTEIN SECRETION</scope>
</reference>
<sequence>MLIKLLTKVFGSRNDRTLRRMRKVVNIINAMEPEMEKLSDEELKGKTAEFRARLEKGEVLENLIPEAFAVVREASKRVFGMRHFDVQLLGGMVLNERCIAEMRTGEGKTLTATLPAYLNALTGKGVHVVTVNDYLAQRDAENNRPLFEFLGLTVGINLPGMPAPAKREAYAADITYGTNNEYGFDYLRDNMAFSPEERVQRKLHYALVDEVDSILIDEARTPLIISGPAEDSSEMYKRVNKIIPHLIRQEKEDSETFQGEGHFSVDEKSRQVNLTERGLVLIEELLVKEGIMDEGESLYSPANIMLMHHVTAALRAHALFTRDVDYIVKDGEVIIVDEHTGRTMQGRRWSDGLHQAVEAKEGVQIQNENQTLASITFQNYFRLYEKLAGMTGTADTEAFEFSSIYKLDTVVVPTNRPMIRKDLPDLVYMTEAEKIQAIIEDIKERTAKGQPVLVGTISIEKSELVSNELTKAGIKHNVLNAKFHANEAAIVAQAGYPAAVTIATNMAGRGTDIVLGGSWQAEVAALENPTAEQIEKIKADWQVRHDAVLEAGGLHIIGTERHESRRIDNQLRGRSGRQGDAGSSRFYLSMEDALMRIFASDRVSGMMRKLGMKPGEAIEHPWVTKAIANAQRKVESRNFDIRKQLLEYDDVANDQRRAIYSQRNELLDVSDVSETINSIREDVFKATIDAYIPPQSLEEMWDIPGLQERLKNDFDLDLPIAEWLDKEPELHEETLRERILAQSIEVYQRKEEVVGAEMMRHFEKGVMLQTLDSLWKEHLAAMDYLRQGIHLRGYAQKDPKQEYKRESFSMFAAMLESLKYEVISTLSKVQVRMPEEVEELEQQRRMEAERLAQMQQLSHQDDDSAAAAALAAQTGERKVGRNDPCPCGSGKKYKQCHGRLQ</sequence>